<name>KYNU2_ASPOR</name>
<keyword id="KW-0963">Cytoplasm</keyword>
<keyword id="KW-0378">Hydrolase</keyword>
<keyword id="KW-0662">Pyridine nucleotide biosynthesis</keyword>
<keyword id="KW-0663">Pyridoxal phosphate</keyword>
<keyword id="KW-1185">Reference proteome</keyword>
<comment type="function">
    <text evidence="1">Catalyzes the cleavage of L-kynurenine (L-Kyn) and L-3-hydroxykynurenine (L-3OHKyn) into anthranilic acid (AA) and 3-hydroxyanthranilic acid (3-OHAA), respectively.</text>
</comment>
<comment type="catalytic activity">
    <reaction evidence="1">
        <text>L-kynurenine + H2O = anthranilate + L-alanine + H(+)</text>
        <dbReference type="Rhea" id="RHEA:16813"/>
        <dbReference type="ChEBI" id="CHEBI:15377"/>
        <dbReference type="ChEBI" id="CHEBI:15378"/>
        <dbReference type="ChEBI" id="CHEBI:16567"/>
        <dbReference type="ChEBI" id="CHEBI:57959"/>
        <dbReference type="ChEBI" id="CHEBI:57972"/>
        <dbReference type="EC" id="3.7.1.3"/>
    </reaction>
</comment>
<comment type="catalytic activity">
    <reaction evidence="1">
        <text>3-hydroxy-L-kynurenine + H2O = 3-hydroxyanthranilate + L-alanine + H(+)</text>
        <dbReference type="Rhea" id="RHEA:25143"/>
        <dbReference type="ChEBI" id="CHEBI:15377"/>
        <dbReference type="ChEBI" id="CHEBI:15378"/>
        <dbReference type="ChEBI" id="CHEBI:36559"/>
        <dbReference type="ChEBI" id="CHEBI:57972"/>
        <dbReference type="ChEBI" id="CHEBI:58125"/>
        <dbReference type="EC" id="3.7.1.3"/>
    </reaction>
</comment>
<comment type="cofactor">
    <cofactor evidence="1">
        <name>pyridoxal 5'-phosphate</name>
        <dbReference type="ChEBI" id="CHEBI:597326"/>
    </cofactor>
</comment>
<comment type="pathway">
    <text evidence="1">Amino-acid degradation; L-kynurenine degradation; L-alanine and anthranilate from L-kynurenine: step 1/1.</text>
</comment>
<comment type="pathway">
    <text evidence="1">Cofactor biosynthesis; NAD(+) biosynthesis; quinolinate from L-kynurenine: step 2/3.</text>
</comment>
<comment type="subunit">
    <text evidence="1">Homodimer.</text>
</comment>
<comment type="subcellular location">
    <subcellularLocation>
        <location evidence="1">Cytoplasm</location>
    </subcellularLocation>
</comment>
<comment type="similarity">
    <text evidence="1">Belongs to the kynureninase family.</text>
</comment>
<proteinExistence type="inferred from homology"/>
<accession>Q2UJE8</accession>
<feature type="chain" id="PRO_0000356970" description="Kynureninase 2">
    <location>
        <begin position="1"/>
        <end position="468"/>
    </location>
</feature>
<feature type="binding site" evidence="1">
    <location>
        <position position="134"/>
    </location>
    <ligand>
        <name>pyridoxal 5'-phosphate</name>
        <dbReference type="ChEBI" id="CHEBI:597326"/>
    </ligand>
</feature>
<feature type="binding site" evidence="1">
    <location>
        <position position="135"/>
    </location>
    <ligand>
        <name>pyridoxal 5'-phosphate</name>
        <dbReference type="ChEBI" id="CHEBI:597326"/>
    </ligand>
</feature>
<feature type="binding site" evidence="1">
    <location>
        <begin position="162"/>
        <end position="165"/>
    </location>
    <ligand>
        <name>pyridoxal 5'-phosphate</name>
        <dbReference type="ChEBI" id="CHEBI:597326"/>
    </ligand>
</feature>
<feature type="binding site" evidence="1">
    <location>
        <position position="247"/>
    </location>
    <ligand>
        <name>pyridoxal 5'-phosphate</name>
        <dbReference type="ChEBI" id="CHEBI:597326"/>
    </ligand>
</feature>
<feature type="binding site" evidence="1">
    <location>
        <position position="250"/>
    </location>
    <ligand>
        <name>pyridoxal 5'-phosphate</name>
        <dbReference type="ChEBI" id="CHEBI:597326"/>
    </ligand>
</feature>
<feature type="binding site" evidence="1">
    <location>
        <position position="272"/>
    </location>
    <ligand>
        <name>pyridoxal 5'-phosphate</name>
        <dbReference type="ChEBI" id="CHEBI:597326"/>
    </ligand>
</feature>
<feature type="binding site" evidence="1">
    <location>
        <position position="312"/>
    </location>
    <ligand>
        <name>pyridoxal 5'-phosphate</name>
        <dbReference type="ChEBI" id="CHEBI:597326"/>
    </ligand>
</feature>
<feature type="binding site" evidence="1">
    <location>
        <position position="340"/>
    </location>
    <ligand>
        <name>pyridoxal 5'-phosphate</name>
        <dbReference type="ChEBI" id="CHEBI:597326"/>
    </ligand>
</feature>
<feature type="modified residue" description="N6-(pyridoxal phosphate)lysine" evidence="1">
    <location>
        <position position="273"/>
    </location>
</feature>
<organism>
    <name type="scientific">Aspergillus oryzae (strain ATCC 42149 / RIB 40)</name>
    <name type="common">Yellow koji mold</name>
    <dbReference type="NCBI Taxonomy" id="510516"/>
    <lineage>
        <taxon>Eukaryota</taxon>
        <taxon>Fungi</taxon>
        <taxon>Dikarya</taxon>
        <taxon>Ascomycota</taxon>
        <taxon>Pezizomycotina</taxon>
        <taxon>Eurotiomycetes</taxon>
        <taxon>Eurotiomycetidae</taxon>
        <taxon>Eurotiales</taxon>
        <taxon>Aspergillaceae</taxon>
        <taxon>Aspergillus</taxon>
        <taxon>Aspergillus subgen. Circumdati</taxon>
    </lineage>
</organism>
<protein>
    <recommendedName>
        <fullName evidence="1">Kynureninase 2</fullName>
        <ecNumber evidence="1">3.7.1.3</ecNumber>
    </recommendedName>
    <alternativeName>
        <fullName evidence="1">Biosynthesis of nicotinic acid protein 5-2</fullName>
    </alternativeName>
    <alternativeName>
        <fullName evidence="1">L-kynurenine hydrolase 2</fullName>
    </alternativeName>
</protein>
<reference key="1">
    <citation type="journal article" date="2005" name="Nature">
        <title>Genome sequencing and analysis of Aspergillus oryzae.</title>
        <authorList>
            <person name="Machida M."/>
            <person name="Asai K."/>
            <person name="Sano M."/>
            <person name="Tanaka T."/>
            <person name="Kumagai T."/>
            <person name="Terai G."/>
            <person name="Kusumoto K."/>
            <person name="Arima T."/>
            <person name="Akita O."/>
            <person name="Kashiwagi Y."/>
            <person name="Abe K."/>
            <person name="Gomi K."/>
            <person name="Horiuchi H."/>
            <person name="Kitamoto K."/>
            <person name="Kobayashi T."/>
            <person name="Takeuchi M."/>
            <person name="Denning D.W."/>
            <person name="Galagan J.E."/>
            <person name="Nierman W.C."/>
            <person name="Yu J."/>
            <person name="Archer D.B."/>
            <person name="Bennett J.W."/>
            <person name="Bhatnagar D."/>
            <person name="Cleveland T.E."/>
            <person name="Fedorova N.D."/>
            <person name="Gotoh O."/>
            <person name="Horikawa H."/>
            <person name="Hosoyama A."/>
            <person name="Ichinomiya M."/>
            <person name="Igarashi R."/>
            <person name="Iwashita K."/>
            <person name="Juvvadi P.R."/>
            <person name="Kato M."/>
            <person name="Kato Y."/>
            <person name="Kin T."/>
            <person name="Kokubun A."/>
            <person name="Maeda H."/>
            <person name="Maeyama N."/>
            <person name="Maruyama J."/>
            <person name="Nagasaki H."/>
            <person name="Nakajima T."/>
            <person name="Oda K."/>
            <person name="Okada K."/>
            <person name="Paulsen I."/>
            <person name="Sakamoto K."/>
            <person name="Sawano T."/>
            <person name="Takahashi M."/>
            <person name="Takase K."/>
            <person name="Terabayashi Y."/>
            <person name="Wortman J.R."/>
            <person name="Yamada O."/>
            <person name="Yamagata Y."/>
            <person name="Anazawa H."/>
            <person name="Hata Y."/>
            <person name="Koide Y."/>
            <person name="Komori T."/>
            <person name="Koyama Y."/>
            <person name="Minetoki T."/>
            <person name="Suharnan S."/>
            <person name="Tanaka A."/>
            <person name="Isono K."/>
            <person name="Kuhara S."/>
            <person name="Ogasawara N."/>
            <person name="Kikuchi H."/>
        </authorList>
    </citation>
    <scope>NUCLEOTIDE SEQUENCE [LARGE SCALE GENOMIC DNA]</scope>
    <source>
        <strain>ATCC 42149 / RIB 40</strain>
    </source>
</reference>
<evidence type="ECO:0000255" key="1">
    <source>
        <dbReference type="HAMAP-Rule" id="MF_03017"/>
    </source>
</evidence>
<gene>
    <name type="primary">bna5-2</name>
    <name type="ORF">AO090003001247</name>
</gene>
<dbReference type="EC" id="3.7.1.3" evidence="1"/>
<dbReference type="EMBL" id="BA000050">
    <property type="protein sequence ID" value="BAE58317.1"/>
    <property type="molecule type" value="Genomic_DNA"/>
</dbReference>
<dbReference type="RefSeq" id="XP_001820319.1">
    <property type="nucleotide sequence ID" value="XM_001820267.2"/>
</dbReference>
<dbReference type="SMR" id="Q2UJE8"/>
<dbReference type="STRING" id="510516.Q2UJE8"/>
<dbReference type="EnsemblFungi" id="BAE58317">
    <property type="protein sequence ID" value="BAE58317"/>
    <property type="gene ID" value="AO090003001247"/>
</dbReference>
<dbReference type="GeneID" id="5992302"/>
<dbReference type="KEGG" id="aor:AO090003001247"/>
<dbReference type="VEuPathDB" id="FungiDB:AO090003001247"/>
<dbReference type="HOGENOM" id="CLU_003433_4_0_1"/>
<dbReference type="OMA" id="SHVAYRS"/>
<dbReference type="OrthoDB" id="39729at5052"/>
<dbReference type="UniPathway" id="UPA00253">
    <property type="reaction ID" value="UER00329"/>
</dbReference>
<dbReference type="UniPathway" id="UPA00334">
    <property type="reaction ID" value="UER00455"/>
</dbReference>
<dbReference type="Proteomes" id="UP000006564">
    <property type="component" value="Chromosome 2"/>
</dbReference>
<dbReference type="GO" id="GO:0005737">
    <property type="term" value="C:cytoplasm"/>
    <property type="evidence" value="ECO:0007669"/>
    <property type="project" value="UniProtKB-SubCell"/>
</dbReference>
<dbReference type="GO" id="GO:0030429">
    <property type="term" value="F:kynureninase activity"/>
    <property type="evidence" value="ECO:0007669"/>
    <property type="project" value="UniProtKB-UniRule"/>
</dbReference>
<dbReference type="GO" id="GO:0030170">
    <property type="term" value="F:pyridoxal phosphate binding"/>
    <property type="evidence" value="ECO:0007669"/>
    <property type="project" value="UniProtKB-UniRule"/>
</dbReference>
<dbReference type="GO" id="GO:0034354">
    <property type="term" value="P:'de novo' NAD biosynthetic process from L-tryptophan"/>
    <property type="evidence" value="ECO:0007669"/>
    <property type="project" value="UniProtKB-UniRule"/>
</dbReference>
<dbReference type="GO" id="GO:0043420">
    <property type="term" value="P:anthranilate metabolic process"/>
    <property type="evidence" value="ECO:0007669"/>
    <property type="project" value="UniProtKB-UniRule"/>
</dbReference>
<dbReference type="GO" id="GO:0097053">
    <property type="term" value="P:L-kynurenine catabolic process"/>
    <property type="evidence" value="ECO:0007669"/>
    <property type="project" value="UniProtKB-UniRule"/>
</dbReference>
<dbReference type="GO" id="GO:0019441">
    <property type="term" value="P:L-tryptophan catabolic process to kynurenine"/>
    <property type="evidence" value="ECO:0007669"/>
    <property type="project" value="TreeGrafter"/>
</dbReference>
<dbReference type="GO" id="GO:0019805">
    <property type="term" value="P:quinolinate biosynthetic process"/>
    <property type="evidence" value="ECO:0007669"/>
    <property type="project" value="UniProtKB-UniRule"/>
</dbReference>
<dbReference type="FunFam" id="3.40.640.10:FF:000031">
    <property type="entry name" value="Kynureninase"/>
    <property type="match status" value="1"/>
</dbReference>
<dbReference type="Gene3D" id="3.90.1150.10">
    <property type="entry name" value="Aspartate Aminotransferase, domain 1"/>
    <property type="match status" value="1"/>
</dbReference>
<dbReference type="Gene3D" id="3.40.640.10">
    <property type="entry name" value="Type I PLP-dependent aspartate aminotransferase-like (Major domain)"/>
    <property type="match status" value="1"/>
</dbReference>
<dbReference type="HAMAP" id="MF_01970">
    <property type="entry name" value="Kynureninase"/>
    <property type="match status" value="1"/>
</dbReference>
<dbReference type="InterPro" id="IPR000192">
    <property type="entry name" value="Aminotrans_V_dom"/>
</dbReference>
<dbReference type="InterPro" id="IPR010111">
    <property type="entry name" value="Kynureninase"/>
</dbReference>
<dbReference type="InterPro" id="IPR015424">
    <property type="entry name" value="PyrdxlP-dep_Trfase"/>
</dbReference>
<dbReference type="InterPro" id="IPR015421">
    <property type="entry name" value="PyrdxlP-dep_Trfase_major"/>
</dbReference>
<dbReference type="InterPro" id="IPR015422">
    <property type="entry name" value="PyrdxlP-dep_Trfase_small"/>
</dbReference>
<dbReference type="NCBIfam" id="TIGR01814">
    <property type="entry name" value="kynureninase"/>
    <property type="match status" value="1"/>
</dbReference>
<dbReference type="PANTHER" id="PTHR14084">
    <property type="entry name" value="KYNURENINASE"/>
    <property type="match status" value="1"/>
</dbReference>
<dbReference type="PANTHER" id="PTHR14084:SF2">
    <property type="entry name" value="KYNURENINASE 2"/>
    <property type="match status" value="1"/>
</dbReference>
<dbReference type="Pfam" id="PF00266">
    <property type="entry name" value="Aminotran_5"/>
    <property type="match status" value="1"/>
</dbReference>
<dbReference type="Pfam" id="PF22580">
    <property type="entry name" value="KYNU_C"/>
    <property type="match status" value="1"/>
</dbReference>
<dbReference type="PIRSF" id="PIRSF038800">
    <property type="entry name" value="KYNU"/>
    <property type="match status" value="1"/>
</dbReference>
<dbReference type="SUPFAM" id="SSF53383">
    <property type="entry name" value="PLP-dependent transferases"/>
    <property type="match status" value="1"/>
</dbReference>
<sequence length="468" mass="51623">MSNVKSSKPVFPENAGSNEYAASLDAADPLASFRDKFIIPSKANINSKKLAKPGLSSDPCIYFCGNSLGIQPKATAKYLEAQLDTWSSIGVSGHFVDLEGSPLKQWQLLSEQAAASMSKIVGAQAEEVAAMGTLTANLHLLLASFYKPTPTKHKILLDWKAFPSDHYAIESHLAWHNLDPKQSMVLIGPDEGEYEISTEKILSYIDEHAESAALILLPGIQYYTGQLFDIQKITAYAQSRDLTVGWDLAHAYGNVELKLHDWDVDFAAWCTYKYGNAGPGAMGGLFVHERHGRVDYSEGEDAPKFRHRLTGWYGGDRSVRFKMDNNFKPIPGAGGWQLSNPSAIDLACLCASLSVFDETSMAELRKKSVMLTAYLEHLLLKDTTDETRPFRIVTPADPEARGAQLSVLLKPGLLQNVSQKLQEGGIVCDKREPGVVRVAPTPLYNTFTDVWKFVSYFKAALDEPELKN</sequence>